<reference key="1">
    <citation type="journal article" date="2005" name="Genome Res.">
        <title>The Chlamydophila abortus genome sequence reveals an array of variable proteins that contribute to interspecies variation.</title>
        <authorList>
            <person name="Thomson N.R."/>
            <person name="Yeats C."/>
            <person name="Bell K."/>
            <person name="Holden M.T.G."/>
            <person name="Bentley S.D."/>
            <person name="Livingstone M."/>
            <person name="Cerdeno-Tarraga A.-M."/>
            <person name="Harris B."/>
            <person name="Doggett J."/>
            <person name="Ormond D."/>
            <person name="Mungall K."/>
            <person name="Clarke K."/>
            <person name="Feltwell T."/>
            <person name="Hance Z."/>
            <person name="Sanders M."/>
            <person name="Quail M.A."/>
            <person name="Price C."/>
            <person name="Barrell B.G."/>
            <person name="Parkhill J."/>
            <person name="Longbottom D."/>
        </authorList>
    </citation>
    <scope>NUCLEOTIDE SEQUENCE [LARGE SCALE GENOMIC DNA]</scope>
    <source>
        <strain>DSM 27085 / S26/3</strain>
    </source>
</reference>
<name>KDSA_CHLAB</name>
<feature type="chain" id="PRO_0000304443" description="2-dehydro-3-deoxyphosphooctonate aldolase">
    <location>
        <begin position="1"/>
        <end position="269"/>
    </location>
</feature>
<dbReference type="EC" id="2.5.1.55" evidence="1"/>
<dbReference type="EMBL" id="CR848038">
    <property type="protein sequence ID" value="CAH63479.1"/>
    <property type="molecule type" value="Genomic_DNA"/>
</dbReference>
<dbReference type="RefSeq" id="WP_006343699.1">
    <property type="nucleotide sequence ID" value="NC_004552.2"/>
</dbReference>
<dbReference type="SMR" id="Q5L789"/>
<dbReference type="GeneID" id="93024561"/>
<dbReference type="KEGG" id="cab:CAB021"/>
<dbReference type="eggNOG" id="COG2877">
    <property type="taxonomic scope" value="Bacteria"/>
</dbReference>
<dbReference type="HOGENOM" id="CLU_036666_0_0_0"/>
<dbReference type="OrthoDB" id="9780456at2"/>
<dbReference type="UniPathway" id="UPA00030"/>
<dbReference type="UniPathway" id="UPA00357">
    <property type="reaction ID" value="UER00474"/>
</dbReference>
<dbReference type="Proteomes" id="UP000001012">
    <property type="component" value="Chromosome"/>
</dbReference>
<dbReference type="GO" id="GO:0005737">
    <property type="term" value="C:cytoplasm"/>
    <property type="evidence" value="ECO:0007669"/>
    <property type="project" value="UniProtKB-SubCell"/>
</dbReference>
<dbReference type="GO" id="GO:0008676">
    <property type="term" value="F:3-deoxy-8-phosphooctulonate synthase activity"/>
    <property type="evidence" value="ECO:0007669"/>
    <property type="project" value="UniProtKB-UniRule"/>
</dbReference>
<dbReference type="GO" id="GO:0019294">
    <property type="term" value="P:keto-3-deoxy-D-manno-octulosonic acid biosynthetic process"/>
    <property type="evidence" value="ECO:0007669"/>
    <property type="project" value="UniProtKB-UniRule"/>
</dbReference>
<dbReference type="Gene3D" id="3.20.20.70">
    <property type="entry name" value="Aldolase class I"/>
    <property type="match status" value="1"/>
</dbReference>
<dbReference type="HAMAP" id="MF_00056">
    <property type="entry name" value="KDO8P_synth"/>
    <property type="match status" value="1"/>
</dbReference>
<dbReference type="InterPro" id="IPR013785">
    <property type="entry name" value="Aldolase_TIM"/>
</dbReference>
<dbReference type="InterPro" id="IPR006218">
    <property type="entry name" value="DAHP1/KDSA"/>
</dbReference>
<dbReference type="InterPro" id="IPR006269">
    <property type="entry name" value="KDO8P_synthase"/>
</dbReference>
<dbReference type="NCBIfam" id="TIGR01362">
    <property type="entry name" value="KDO8P_synth"/>
    <property type="match status" value="1"/>
</dbReference>
<dbReference type="NCBIfam" id="NF003543">
    <property type="entry name" value="PRK05198.1"/>
    <property type="match status" value="1"/>
</dbReference>
<dbReference type="PANTHER" id="PTHR21057">
    <property type="entry name" value="PHOSPHO-2-DEHYDRO-3-DEOXYHEPTONATE ALDOLASE"/>
    <property type="match status" value="1"/>
</dbReference>
<dbReference type="Pfam" id="PF00793">
    <property type="entry name" value="DAHP_synth_1"/>
    <property type="match status" value="1"/>
</dbReference>
<dbReference type="SUPFAM" id="SSF51569">
    <property type="entry name" value="Aldolase"/>
    <property type="match status" value="1"/>
</dbReference>
<comment type="catalytic activity">
    <reaction evidence="1">
        <text>D-arabinose 5-phosphate + phosphoenolpyruvate + H2O = 3-deoxy-alpha-D-manno-2-octulosonate-8-phosphate + phosphate</text>
        <dbReference type="Rhea" id="RHEA:14053"/>
        <dbReference type="ChEBI" id="CHEBI:15377"/>
        <dbReference type="ChEBI" id="CHEBI:43474"/>
        <dbReference type="ChEBI" id="CHEBI:57693"/>
        <dbReference type="ChEBI" id="CHEBI:58702"/>
        <dbReference type="ChEBI" id="CHEBI:85985"/>
        <dbReference type="EC" id="2.5.1.55"/>
    </reaction>
</comment>
<comment type="pathway">
    <text evidence="1">Carbohydrate biosynthesis; 3-deoxy-D-manno-octulosonate biosynthesis; 3-deoxy-D-manno-octulosonate from D-ribulose 5-phosphate: step 2/3.</text>
</comment>
<comment type="pathway">
    <text evidence="1">Bacterial outer membrane biogenesis; lipopolysaccharide biosynthesis.</text>
</comment>
<comment type="subcellular location">
    <subcellularLocation>
        <location evidence="1">Cytoplasm</location>
    </subcellularLocation>
</comment>
<comment type="similarity">
    <text evidence="1">Belongs to the KdsA family.</text>
</comment>
<accession>Q5L789</accession>
<organism>
    <name type="scientific">Chlamydia abortus (strain DSM 27085 / S26/3)</name>
    <name type="common">Chlamydophila abortus</name>
    <dbReference type="NCBI Taxonomy" id="218497"/>
    <lineage>
        <taxon>Bacteria</taxon>
        <taxon>Pseudomonadati</taxon>
        <taxon>Chlamydiota</taxon>
        <taxon>Chlamydiia</taxon>
        <taxon>Chlamydiales</taxon>
        <taxon>Chlamydiaceae</taxon>
        <taxon>Chlamydia/Chlamydophila group</taxon>
        <taxon>Chlamydia</taxon>
    </lineage>
</organism>
<proteinExistence type="inferred from homology"/>
<sequence length="269" mass="29304">MFSDKMILIAGPCVIEEEETTLEIAAKIQEIVAPYADHIHWIFKSSYDKANRSSIHSYRGPGLKEGLRILSKVKQTFGVEILTDVHSPEEARAAAEVCDILQIPAFLCRQTDLLVAAAETQAVINIKKGQFLSPWDMQGPVDKVLSTGNSKIILTERGCSFGYNNLVSDMRAIAVLSKMGFPVVFDGTHSVQLPGGLKTHSGGQTEFIPTLTRAALAAGAHGLFIETHTNPAIAKSDAASMLSLKAFEVLLPVWNQLYQCVRSFEMASV</sequence>
<evidence type="ECO:0000255" key="1">
    <source>
        <dbReference type="HAMAP-Rule" id="MF_00056"/>
    </source>
</evidence>
<keyword id="KW-0963">Cytoplasm</keyword>
<keyword id="KW-0448">Lipopolysaccharide biosynthesis</keyword>
<keyword id="KW-0808">Transferase</keyword>
<gene>
    <name evidence="1" type="primary">kdsA</name>
    <name type="ordered locus">CAB021</name>
</gene>
<protein>
    <recommendedName>
        <fullName evidence="1">2-dehydro-3-deoxyphosphooctonate aldolase</fullName>
        <ecNumber evidence="1">2.5.1.55</ecNumber>
    </recommendedName>
    <alternativeName>
        <fullName evidence="1">3-deoxy-D-manno-octulosonic acid 8-phosphate synthase</fullName>
    </alternativeName>
    <alternativeName>
        <fullName evidence="1">KDO-8-phosphate synthase</fullName>
        <shortName evidence="1">KDO 8-P synthase</shortName>
        <shortName evidence="1">KDOPS</shortName>
    </alternativeName>
    <alternativeName>
        <fullName evidence="1">Phospho-2-dehydro-3-deoxyoctonate aldolase</fullName>
    </alternativeName>
</protein>